<protein>
    <recommendedName>
        <fullName>Kexin</fullName>
        <ecNumber>3.4.21.61</ecNumber>
    </recommendedName>
    <alternativeName>
        <fullName>KEX2 protease</fullName>
    </alternativeName>
</protein>
<feature type="signal peptide" evidence="2">
    <location>
        <begin position="1"/>
        <end position="20"/>
    </location>
</feature>
<feature type="propeptide" id="PRO_0000027041" evidence="2">
    <location>
        <begin position="21"/>
        <end status="unknown"/>
    </location>
</feature>
<feature type="chain" id="PRO_0000027042" description="Kexin">
    <location>
        <begin status="unknown"/>
        <end position="938"/>
    </location>
</feature>
<feature type="topological domain" description="Lumenal" evidence="2">
    <location>
        <begin status="unknown"/>
        <end position="774"/>
    </location>
</feature>
<feature type="transmembrane region" description="Helical" evidence="2">
    <location>
        <begin position="775"/>
        <end position="795"/>
    </location>
</feature>
<feature type="topological domain" description="Cytoplasmic" evidence="2">
    <location>
        <begin position="796"/>
        <end position="924"/>
    </location>
</feature>
<feature type="domain" description="Peptidase S8" evidence="4">
    <location>
        <begin position="179"/>
        <end position="489"/>
    </location>
</feature>
<feature type="domain" description="P/Homo B" evidence="3">
    <location>
        <begin position="498"/>
        <end position="647"/>
    </location>
</feature>
<feature type="region of interest" description="Disordered" evidence="5">
    <location>
        <begin position="671"/>
        <end position="768"/>
    </location>
</feature>
<feature type="region of interest" description="Disordered" evidence="5">
    <location>
        <begin position="798"/>
        <end position="938"/>
    </location>
</feature>
<feature type="compositionally biased region" description="Low complexity" evidence="5">
    <location>
        <begin position="677"/>
        <end position="691"/>
    </location>
</feature>
<feature type="compositionally biased region" description="Polar residues" evidence="5">
    <location>
        <begin position="711"/>
        <end position="735"/>
    </location>
</feature>
<feature type="compositionally biased region" description="Acidic residues" evidence="5">
    <location>
        <begin position="740"/>
        <end position="762"/>
    </location>
</feature>
<feature type="compositionally biased region" description="Basic residues" evidence="5">
    <location>
        <begin position="798"/>
        <end position="808"/>
    </location>
</feature>
<feature type="compositionally biased region" description="Acidic residues" evidence="5">
    <location>
        <begin position="820"/>
        <end position="831"/>
    </location>
</feature>
<feature type="compositionally biased region" description="Basic and acidic residues" evidence="5">
    <location>
        <begin position="832"/>
        <end position="849"/>
    </location>
</feature>
<feature type="compositionally biased region" description="Low complexity" evidence="5">
    <location>
        <begin position="850"/>
        <end position="859"/>
    </location>
</feature>
<feature type="compositionally biased region" description="Basic and acidic residues" evidence="5">
    <location>
        <begin position="860"/>
        <end position="874"/>
    </location>
</feature>
<feature type="compositionally biased region" description="Polar residues" evidence="5">
    <location>
        <begin position="902"/>
        <end position="919"/>
    </location>
</feature>
<feature type="compositionally biased region" description="Basic and acidic residues" evidence="5">
    <location>
        <begin position="921"/>
        <end position="938"/>
    </location>
</feature>
<feature type="active site" description="Charge relay system" evidence="4">
    <location>
        <position position="213"/>
    </location>
</feature>
<feature type="active site" description="Charge relay system" evidence="4">
    <location>
        <position position="251"/>
    </location>
</feature>
<feature type="active site" description="Charge relay system" evidence="4">
    <location>
        <position position="422"/>
    </location>
</feature>
<feature type="glycosylation site" description="N-linked (GlcNAc...) asparagine" evidence="2">
    <location>
        <position position="41"/>
    </location>
</feature>
<feature type="glycosylation site" description="N-linked (GlcNAc...) asparagine" evidence="2">
    <location>
        <position position="193"/>
    </location>
</feature>
<feature type="glycosylation site" description="N-linked (GlcNAc...) asparagine" evidence="2">
    <location>
        <position position="441"/>
    </location>
</feature>
<feature type="glycosylation site" description="N-linked (GlcNAc...) asparagine" evidence="2">
    <location>
        <position position="512"/>
    </location>
</feature>
<feature type="glycosylation site" description="N-linked (GlcNAc...) asparagine" evidence="2">
    <location>
        <position position="539"/>
    </location>
</feature>
<feature type="glycosylation site" description="N-linked (GlcNAc...) asparagine" evidence="2">
    <location>
        <position position="599"/>
    </location>
</feature>
<feature type="disulfide bond" evidence="1">
    <location>
        <begin position="267"/>
        <end position="414"/>
    </location>
</feature>
<feature type="disulfide bond" evidence="1">
    <location>
        <begin position="359"/>
        <end position="389"/>
    </location>
</feature>
<feature type="sequence conflict" description="In Ref. 1; AAB80929." evidence="6" ref="1">
    <original>N</original>
    <variation>D</variation>
    <location>
        <position position="201"/>
    </location>
</feature>
<feature type="sequence conflict" description="In Ref. 1; AAB80929." evidence="6" ref="1">
    <original>F</original>
    <variation>S</variation>
    <location>
        <position position="831"/>
    </location>
</feature>
<feature type="sequence conflict" description="In Ref. 1; AAB80929." evidence="6" ref="1">
    <original>T</original>
    <variation>A</variation>
    <location>
        <position position="868"/>
    </location>
</feature>
<feature type="sequence conflict" description="In Ref. 1; AAB80929." evidence="6" ref="1">
    <original>E</original>
    <variation>EEEE</variation>
    <location>
        <position position="899"/>
    </location>
</feature>
<comment type="catalytic activity">
    <reaction>
        <text>Cleavage of -Lys-Arg-|-Xaa- and -Arg-Arg-|-Xaa- bonds to process yeast alpha-factor pheromone and killer toxin precursors.</text>
        <dbReference type="EC" id="3.4.21.61"/>
    </reaction>
</comment>
<comment type="cofactor">
    <cofactor evidence="1">
        <name>Ca(2+)</name>
        <dbReference type="ChEBI" id="CHEBI:29108"/>
    </cofactor>
</comment>
<comment type="subcellular location">
    <subcellularLocation>
        <location evidence="1">Golgi apparatus</location>
        <location evidence="1">trans-Golgi network membrane</location>
        <topology evidence="1">Single-pass type I membrane protein</topology>
    </subcellularLocation>
</comment>
<comment type="PTM">
    <text evidence="1">O-glycosylated.</text>
</comment>
<comment type="similarity">
    <text evidence="6">Belongs to the peptidase S8 family. Furin subfamily.</text>
</comment>
<comment type="sequence caution" evidence="6">
    <conflict type="frameshift">
        <sequence resource="EMBL-CDS" id="AAB80929"/>
    </conflict>
</comment>
<accession>O13359</accession>
<accession>C4YDD7</accession>
<proteinExistence type="inferred from homology"/>
<keyword id="KW-0106">Calcium</keyword>
<keyword id="KW-1015">Disulfide bond</keyword>
<keyword id="KW-0325">Glycoprotein</keyword>
<keyword id="KW-0333">Golgi apparatus</keyword>
<keyword id="KW-0378">Hydrolase</keyword>
<keyword id="KW-0472">Membrane</keyword>
<keyword id="KW-0645">Protease</keyword>
<keyword id="KW-0720">Serine protease</keyword>
<keyword id="KW-0732">Signal</keyword>
<keyword id="KW-0812">Transmembrane</keyword>
<keyword id="KW-1133">Transmembrane helix</keyword>
<keyword id="KW-0865">Zymogen</keyword>
<organism>
    <name type="scientific">Candida albicans (strain WO-1)</name>
    <name type="common">Yeast</name>
    <dbReference type="NCBI Taxonomy" id="294748"/>
    <lineage>
        <taxon>Eukaryota</taxon>
        <taxon>Fungi</taxon>
        <taxon>Dikarya</taxon>
        <taxon>Ascomycota</taxon>
        <taxon>Saccharomycotina</taxon>
        <taxon>Pichiomycetes</taxon>
        <taxon>Debaryomycetaceae</taxon>
        <taxon>Candida/Lodderomyces clade</taxon>
        <taxon>Candida</taxon>
    </lineage>
</organism>
<reference key="1">
    <citation type="journal article" date="1997" name="J. Biol. Chem.">
        <title>KEX2 influences Candida albicans proteinase secretion and hyphal formation.</title>
        <authorList>
            <person name="Newport G.R."/>
            <person name="Agabian N."/>
        </authorList>
    </citation>
    <scope>NUCLEOTIDE SEQUENCE [GENOMIC DNA]</scope>
    <source>
        <strain>WO-1</strain>
    </source>
</reference>
<reference key="2">
    <citation type="journal article" date="2009" name="Nature">
        <title>Evolution of pathogenicity and sexual reproduction in eight Candida genomes.</title>
        <authorList>
            <person name="Butler G."/>
            <person name="Rasmussen M.D."/>
            <person name="Lin M.F."/>
            <person name="Santos M.A.S."/>
            <person name="Sakthikumar S."/>
            <person name="Munro C.A."/>
            <person name="Rheinbay E."/>
            <person name="Grabherr M."/>
            <person name="Forche A."/>
            <person name="Reedy J.L."/>
            <person name="Agrafioti I."/>
            <person name="Arnaud M.B."/>
            <person name="Bates S."/>
            <person name="Brown A.J.P."/>
            <person name="Brunke S."/>
            <person name="Costanzo M.C."/>
            <person name="Fitzpatrick D.A."/>
            <person name="de Groot P.W.J."/>
            <person name="Harris D."/>
            <person name="Hoyer L.L."/>
            <person name="Hube B."/>
            <person name="Klis F.M."/>
            <person name="Kodira C."/>
            <person name="Lennard N."/>
            <person name="Logue M.E."/>
            <person name="Martin R."/>
            <person name="Neiman A.M."/>
            <person name="Nikolaou E."/>
            <person name="Quail M.A."/>
            <person name="Quinn J."/>
            <person name="Santos M.C."/>
            <person name="Schmitzberger F.F."/>
            <person name="Sherlock G."/>
            <person name="Shah P."/>
            <person name="Silverstein K.A.T."/>
            <person name="Skrzypek M.S."/>
            <person name="Soll D."/>
            <person name="Staggs R."/>
            <person name="Stansfield I."/>
            <person name="Stumpf M.P.H."/>
            <person name="Sudbery P.E."/>
            <person name="Srikantha T."/>
            <person name="Zeng Q."/>
            <person name="Berman J."/>
            <person name="Berriman M."/>
            <person name="Heitman J."/>
            <person name="Gow N.A.R."/>
            <person name="Lorenz M.C."/>
            <person name="Birren B.W."/>
            <person name="Kellis M."/>
            <person name="Cuomo C.A."/>
        </authorList>
    </citation>
    <scope>NUCLEOTIDE SEQUENCE [LARGE SCALE GENOMIC DNA]</scope>
    <source>
        <strain>WO-1</strain>
    </source>
</reference>
<sequence length="938" mass="105144">MLPIKLLIFILGYLLSPTLQQYQQIPPRDYENKNYFLVELNTTNSQKPLIDFISHYRGHYNFEHQLSSLDNHYVFSIDKSHPHNSFLGNHNSNEYNLMKRQLGHEQDYDELISHVESIHLLPMKKLSKRIPVPIEMEDVVFDNRDDTGSDNHEATDEAHQKLIEIAKKLDIHDPEFTTQWHLINLKYPGHDVNVTGLWLENILGQGIVTALVDDGVDAESDDIKQNFNSEGSWDFNNKGKSPLPRLFDDYHGTRCAGEIAAVKNDVCGIGVAWKSQVSGIRILSGPITSSDEAEAMVYGLDTNDIYSCSWGPTDNGKVLSEPDVIVKKAMIKGIQEGRDKKGAIYVFASGNGGRFGDSCNFDGYTNSIYSITVGAIDYKGLHPQYSEACSAVMVVTYSSGSGEHIHTTDIKKKCSATHGGTSAAAPLASGIYSLILSANPNLTWRDVQYISVLSATPINEEDGNYQTTALNRKYSHKYGYGKTDAYKMVHFAKTWVNVKPQAWYYSDIIEVNQTITTTPEQKAPSKRDSPQKIIHSSVNVSEKDLKIMNVERVEHITVKVNIDSTYRGRVGMRIISPTGVISDLATFRVNDASTRGFQNWTFMSVAHWGETGIGEWKVEVFVDDSKGDQVEINFKDWQFRIFGESIDGDKAEVYDITKDYAAIRRELLEKEKQNSKSTTTTSSTTTATTTSGGEGDQKTTTSAENKESTTKVDNSASITTSQTASLTSSNEQHQPTESNSDSDSDTDDENKQEGEEDNDNDNDNGNKKANSDNTGFYLMSIAVVGFIAVLLVMKFHKTPGSGRRRRRRDGYEFDIIPGEDYSDSDDDEDDFDTRRADDDSFDLGHRNDQRVVSASQQQRQYDRQQDETRDRLFDDFNAESLPDYENDMFKIGDEEEEEEEGQQSAKAPSNSEGNSGTSTKKYKDNEADEDHKDVVGTQ</sequence>
<gene>
    <name type="primary">KEX2</name>
    <name type="ORF">CAWG_00530</name>
</gene>
<evidence type="ECO:0000250" key="1"/>
<evidence type="ECO:0000255" key="2"/>
<evidence type="ECO:0000255" key="3">
    <source>
        <dbReference type="PROSITE-ProRule" id="PRU01173"/>
    </source>
</evidence>
<evidence type="ECO:0000255" key="4">
    <source>
        <dbReference type="PROSITE-ProRule" id="PRU01240"/>
    </source>
</evidence>
<evidence type="ECO:0000256" key="5">
    <source>
        <dbReference type="SAM" id="MobiDB-lite"/>
    </source>
</evidence>
<evidence type="ECO:0000305" key="6"/>
<dbReference type="EC" id="3.4.21.61"/>
<dbReference type="EMBL" id="AF022372">
    <property type="protein sequence ID" value="AAB80929.1"/>
    <property type="status" value="ALT_FRAME"/>
    <property type="molecule type" value="Genomic_DNA"/>
</dbReference>
<dbReference type="EMBL" id="CH672346">
    <property type="protein sequence ID" value="EEQ42323.1"/>
    <property type="molecule type" value="Genomic_DNA"/>
</dbReference>
<dbReference type="SMR" id="O13359"/>
<dbReference type="GlyCosmos" id="O13359">
    <property type="glycosylation" value="6 sites, No reported glycans"/>
</dbReference>
<dbReference type="PaxDb" id="5476-O13359"/>
<dbReference type="VEuPathDB" id="FungiDB:CAWG_00530"/>
<dbReference type="HOGENOM" id="CLU_002976_2_1_1"/>
<dbReference type="OMA" id="AYEFDII"/>
<dbReference type="OrthoDB" id="22990at766764"/>
<dbReference type="PHI-base" id="PHI:306"/>
<dbReference type="PHI-base" id="PHI:9474"/>
<dbReference type="Proteomes" id="UP000001429">
    <property type="component" value="Chromosome 1, Supercontig 1.1"/>
</dbReference>
<dbReference type="GO" id="GO:0000139">
    <property type="term" value="C:Golgi membrane"/>
    <property type="evidence" value="ECO:0007669"/>
    <property type="project" value="TreeGrafter"/>
</dbReference>
<dbReference type="GO" id="GO:0005802">
    <property type="term" value="C:trans-Golgi network"/>
    <property type="evidence" value="ECO:0007669"/>
    <property type="project" value="TreeGrafter"/>
</dbReference>
<dbReference type="GO" id="GO:0004252">
    <property type="term" value="F:serine-type endopeptidase activity"/>
    <property type="evidence" value="ECO:0007669"/>
    <property type="project" value="UniProtKB-EC"/>
</dbReference>
<dbReference type="GO" id="GO:0016485">
    <property type="term" value="P:protein processing"/>
    <property type="evidence" value="ECO:0007669"/>
    <property type="project" value="TreeGrafter"/>
</dbReference>
<dbReference type="CDD" id="cd04059">
    <property type="entry name" value="Peptidases_S8_Protein_convertases_Kexins_Furin-like"/>
    <property type="match status" value="1"/>
</dbReference>
<dbReference type="FunFam" id="3.40.50.200:FF:000005">
    <property type="entry name" value="Proprotein convertase subtilisin/kexin type 7"/>
    <property type="match status" value="1"/>
</dbReference>
<dbReference type="FunFam" id="2.60.120.260:FF:000026">
    <property type="entry name" value="proprotein convertase subtilisin/kexin type 7"/>
    <property type="match status" value="1"/>
</dbReference>
<dbReference type="Gene3D" id="2.60.120.260">
    <property type="entry name" value="Galactose-binding domain-like"/>
    <property type="match status" value="1"/>
</dbReference>
<dbReference type="Gene3D" id="3.40.50.200">
    <property type="entry name" value="Peptidase S8/S53 domain"/>
    <property type="match status" value="1"/>
</dbReference>
<dbReference type="InterPro" id="IPR008979">
    <property type="entry name" value="Galactose-bd-like_sf"/>
</dbReference>
<dbReference type="InterPro" id="IPR034182">
    <property type="entry name" value="Kexin/furin"/>
</dbReference>
<dbReference type="InterPro" id="IPR002884">
    <property type="entry name" value="P_dom"/>
</dbReference>
<dbReference type="InterPro" id="IPR000209">
    <property type="entry name" value="Peptidase_S8/S53_dom"/>
</dbReference>
<dbReference type="InterPro" id="IPR036852">
    <property type="entry name" value="Peptidase_S8/S53_dom_sf"/>
</dbReference>
<dbReference type="InterPro" id="IPR022398">
    <property type="entry name" value="Peptidase_S8_His-AS"/>
</dbReference>
<dbReference type="InterPro" id="IPR023828">
    <property type="entry name" value="Peptidase_S8_Ser-AS"/>
</dbReference>
<dbReference type="InterPro" id="IPR015500">
    <property type="entry name" value="Peptidase_S8_subtilisin-rel"/>
</dbReference>
<dbReference type="PANTHER" id="PTHR42884:SF14">
    <property type="entry name" value="NEUROENDOCRINE CONVERTASE 1"/>
    <property type="match status" value="1"/>
</dbReference>
<dbReference type="PANTHER" id="PTHR42884">
    <property type="entry name" value="PROPROTEIN CONVERTASE SUBTILISIN/KEXIN-RELATED"/>
    <property type="match status" value="1"/>
</dbReference>
<dbReference type="Pfam" id="PF01483">
    <property type="entry name" value="P_proprotein"/>
    <property type="match status" value="1"/>
</dbReference>
<dbReference type="Pfam" id="PF00082">
    <property type="entry name" value="Peptidase_S8"/>
    <property type="match status" value="1"/>
</dbReference>
<dbReference type="PRINTS" id="PR00723">
    <property type="entry name" value="SUBTILISIN"/>
</dbReference>
<dbReference type="SUPFAM" id="SSF49785">
    <property type="entry name" value="Galactose-binding domain-like"/>
    <property type="match status" value="1"/>
</dbReference>
<dbReference type="SUPFAM" id="SSF52743">
    <property type="entry name" value="Subtilisin-like"/>
    <property type="match status" value="1"/>
</dbReference>
<dbReference type="PROSITE" id="PS51829">
    <property type="entry name" value="P_HOMO_B"/>
    <property type="match status" value="1"/>
</dbReference>
<dbReference type="PROSITE" id="PS51892">
    <property type="entry name" value="SUBTILASE"/>
    <property type="match status" value="1"/>
</dbReference>
<dbReference type="PROSITE" id="PS00137">
    <property type="entry name" value="SUBTILASE_HIS"/>
    <property type="match status" value="1"/>
</dbReference>
<dbReference type="PROSITE" id="PS00138">
    <property type="entry name" value="SUBTILASE_SER"/>
    <property type="match status" value="1"/>
</dbReference>
<name>KEX2_CANAW</name>